<proteinExistence type="evidence at transcript level"/>
<accession>Q6PBQ2</accession>
<accession>Q6NYA6</accession>
<feature type="chain" id="PRO_0000211520" description="Charged multivesicular body protein 7">
    <location>
        <begin position="1"/>
        <end position="457"/>
    </location>
</feature>
<feature type="region of interest" description="Disordered" evidence="3">
    <location>
        <begin position="381"/>
        <end position="401"/>
    </location>
</feature>
<feature type="region of interest" description="Disordered" evidence="3">
    <location>
        <begin position="435"/>
        <end position="457"/>
    </location>
</feature>
<feature type="coiled-coil region" evidence="2">
    <location>
        <begin position="234"/>
        <end position="266"/>
    </location>
</feature>
<feature type="coiled-coil region" evidence="2">
    <location>
        <begin position="331"/>
        <end position="382"/>
    </location>
</feature>
<feature type="sequence conflict" description="In Ref. 1; AAH66676." evidence="4" ref="1">
    <original>M</original>
    <variation>V</variation>
    <location>
        <position position="421"/>
    </location>
</feature>
<name>CHMP7_DANRE</name>
<gene>
    <name type="primary">chmp7</name>
</gene>
<evidence type="ECO:0000250" key="1">
    <source>
        <dbReference type="UniProtKB" id="Q8WUX9"/>
    </source>
</evidence>
<evidence type="ECO:0000255" key="2"/>
<evidence type="ECO:0000256" key="3">
    <source>
        <dbReference type="SAM" id="MobiDB-lite"/>
    </source>
</evidence>
<evidence type="ECO:0000305" key="4"/>
<protein>
    <recommendedName>
        <fullName>Charged multivesicular body protein 7</fullName>
    </recommendedName>
    <alternativeName>
        <fullName>Chromatin-modifying protein 7</fullName>
    </alternativeName>
</protein>
<organism>
    <name type="scientific">Danio rerio</name>
    <name type="common">Zebrafish</name>
    <name type="synonym">Brachydanio rerio</name>
    <dbReference type="NCBI Taxonomy" id="7955"/>
    <lineage>
        <taxon>Eukaryota</taxon>
        <taxon>Metazoa</taxon>
        <taxon>Chordata</taxon>
        <taxon>Craniata</taxon>
        <taxon>Vertebrata</taxon>
        <taxon>Euteleostomi</taxon>
        <taxon>Actinopterygii</taxon>
        <taxon>Neopterygii</taxon>
        <taxon>Teleostei</taxon>
        <taxon>Ostariophysi</taxon>
        <taxon>Cypriniformes</taxon>
        <taxon>Danionidae</taxon>
        <taxon>Danioninae</taxon>
        <taxon>Danio</taxon>
    </lineage>
</organism>
<dbReference type="EMBL" id="BC059625">
    <property type="protein sequence ID" value="AAH59625.1"/>
    <property type="molecule type" value="mRNA"/>
</dbReference>
<dbReference type="EMBL" id="BC066676">
    <property type="protein sequence ID" value="AAH66676.1"/>
    <property type="molecule type" value="mRNA"/>
</dbReference>
<dbReference type="RefSeq" id="NP_957075.1">
    <property type="nucleotide sequence ID" value="NM_200781.1"/>
</dbReference>
<dbReference type="SMR" id="Q6PBQ2"/>
<dbReference type="FunCoup" id="Q6PBQ2">
    <property type="interactions" value="1924"/>
</dbReference>
<dbReference type="STRING" id="7955.ENSDARP00000060627"/>
<dbReference type="PaxDb" id="7955-ENSDARP00000060627"/>
<dbReference type="GeneID" id="393754"/>
<dbReference type="KEGG" id="dre:393754"/>
<dbReference type="AGR" id="ZFIN:ZDB-GENE-040426-1750"/>
<dbReference type="CTD" id="91782"/>
<dbReference type="ZFIN" id="ZDB-GENE-040426-1750">
    <property type="gene designation" value="chmp7"/>
</dbReference>
<dbReference type="eggNOG" id="KOG2911">
    <property type="taxonomic scope" value="Eukaryota"/>
</dbReference>
<dbReference type="InParanoid" id="Q6PBQ2"/>
<dbReference type="OrthoDB" id="10250120at2759"/>
<dbReference type="PhylomeDB" id="Q6PBQ2"/>
<dbReference type="Reactome" id="R-DRE-1632852">
    <property type="pathway name" value="Macroautophagy"/>
</dbReference>
<dbReference type="Reactome" id="R-DRE-917729">
    <property type="pathway name" value="Endosomal Sorting Complex Required For Transport (ESCRT)"/>
</dbReference>
<dbReference type="Reactome" id="R-DRE-9668328">
    <property type="pathway name" value="Sealing of the nuclear envelope (NE) by ESCRT-III"/>
</dbReference>
<dbReference type="PRO" id="PR:Q6PBQ2"/>
<dbReference type="Proteomes" id="UP000000437">
    <property type="component" value="Chromosome 8"/>
</dbReference>
<dbReference type="GO" id="GO:0009898">
    <property type="term" value="C:cytoplasmic side of plasma membrane"/>
    <property type="evidence" value="ECO:0000318"/>
    <property type="project" value="GO_Central"/>
</dbReference>
<dbReference type="GO" id="GO:0000815">
    <property type="term" value="C:ESCRT III complex"/>
    <property type="evidence" value="ECO:0000250"/>
    <property type="project" value="UniProtKB"/>
</dbReference>
<dbReference type="GO" id="GO:0005771">
    <property type="term" value="C:multivesicular body"/>
    <property type="evidence" value="ECO:0000318"/>
    <property type="project" value="GO_Central"/>
</dbReference>
<dbReference type="GO" id="GO:0005635">
    <property type="term" value="C:nuclear envelope"/>
    <property type="evidence" value="ECO:0000250"/>
    <property type="project" value="UniProtKB"/>
</dbReference>
<dbReference type="GO" id="GO:0010458">
    <property type="term" value="P:exit from mitosis"/>
    <property type="evidence" value="ECO:0000250"/>
    <property type="project" value="UniProtKB"/>
</dbReference>
<dbReference type="GO" id="GO:0045324">
    <property type="term" value="P:late endosome to vacuole transport"/>
    <property type="evidence" value="ECO:0000250"/>
    <property type="project" value="UniProtKB"/>
</dbReference>
<dbReference type="GO" id="GO:0032511">
    <property type="term" value="P:late endosome to vacuole transport via multivesicular body sorting pathway"/>
    <property type="evidence" value="ECO:0000318"/>
    <property type="project" value="GO_Central"/>
</dbReference>
<dbReference type="GO" id="GO:0031468">
    <property type="term" value="P:nuclear membrane reassembly"/>
    <property type="evidence" value="ECO:0000250"/>
    <property type="project" value="UniProtKB"/>
</dbReference>
<dbReference type="GO" id="GO:0015031">
    <property type="term" value="P:protein transport"/>
    <property type="evidence" value="ECO:0007669"/>
    <property type="project" value="UniProtKB-KW"/>
</dbReference>
<dbReference type="GO" id="GO:0006900">
    <property type="term" value="P:vesicle budding from membrane"/>
    <property type="evidence" value="ECO:0000318"/>
    <property type="project" value="GO_Central"/>
</dbReference>
<dbReference type="Gene3D" id="6.10.140.1230">
    <property type="match status" value="1"/>
</dbReference>
<dbReference type="InterPro" id="IPR005024">
    <property type="entry name" value="Snf7_fam"/>
</dbReference>
<dbReference type="PANTHER" id="PTHR22761">
    <property type="entry name" value="CHARGED MULTIVESICULAR BODY PROTEIN"/>
    <property type="match status" value="1"/>
</dbReference>
<dbReference type="PANTHER" id="PTHR22761:SF21">
    <property type="entry name" value="CHARGED MULTIVESICULAR BODY PROTEIN 7"/>
    <property type="match status" value="1"/>
</dbReference>
<dbReference type="Pfam" id="PF03357">
    <property type="entry name" value="Snf7"/>
    <property type="match status" value="1"/>
</dbReference>
<dbReference type="Pfam" id="PF25239">
    <property type="entry name" value="WHD_CHMP7"/>
    <property type="match status" value="1"/>
</dbReference>
<sequence length="457" mass="50980">MSVSVEKRSAWFPPDWDDDERMSFLFSAFKENRDVDCTDWDGKIDFWSPLIIEHCRRCGSVCVNLQDLNENFRRKGSVPLGLSTVIQSMIRSGKVQKESDFAANVDSGWLSWGVGLLLVRPLKWTLSALLGSGRVPLEESFVVIELVKEKAAELLAAYRGSALSARSLLSFQELRSLSSHICPDESTLCMALLQLQREKHVTVSLHEGEKLVKFSQAGQGRVSPVSEVDLGIYQLQCSEKLLEERVEALGHEAEKCKQQAKSLLKEGKKSQALRCLRGSKRVEKKADRLFAQLETVKGILDRIANSQTDRLVMQAYQAGVAALRISLKGVTVERAENLVDQIQELCDTQDEVNQTLASGAPDAGEDSEDLEEELKSLMEKSVPENDLFPAVPTHPITPPRKTDLPDAAFVQFLPSVPNPGMNITDEELDRELRRLTVSDKGLPRESVSPQRRLEPAQ</sequence>
<keyword id="KW-0175">Coiled coil</keyword>
<keyword id="KW-0963">Cytoplasm</keyword>
<keyword id="KW-0539">Nucleus</keyword>
<keyword id="KW-0653">Protein transport</keyword>
<keyword id="KW-1185">Reference proteome</keyword>
<keyword id="KW-0813">Transport</keyword>
<comment type="function">
    <text evidence="1">ESCRT-III-like protein required to recruit the ESCRT-III complex to the nuclear envelope during late anaphase. Together with SPAST, the ESCRT-III complex promotes nuclear envelope sealing and mitotic spindle disassembly during late anaphase. Plays a role in the endosomal sorting pathway.</text>
</comment>
<comment type="subcellular location">
    <subcellularLocation>
        <location evidence="1">Cytoplasm</location>
    </subcellularLocation>
    <subcellularLocation>
        <location evidence="1">Nucleus envelope</location>
    </subcellularLocation>
    <text evidence="1">Diffused localization, with some punctate distribution, especially in the perinuclear area. Localizes to the nucleus envelope during late anaphase.</text>
</comment>
<comment type="similarity">
    <text evidence="4">Belongs to the SNF7 family.</text>
</comment>
<reference key="1">
    <citation type="submission" date="2003-10" db="EMBL/GenBank/DDBJ databases">
        <authorList>
            <consortium name="NIH - Zebrafish Gene Collection (ZGC) project"/>
        </authorList>
    </citation>
    <scope>NUCLEOTIDE SEQUENCE [LARGE SCALE MRNA]</scope>
    <source>
        <tissue>Eye</tissue>
    </source>
</reference>